<keyword id="KW-0328">Glycosyltransferase</keyword>
<keyword id="KW-0448">Lipopolysaccharide biosynthesis</keyword>
<keyword id="KW-1185">Reference proteome</keyword>
<keyword id="KW-0808">Transferase</keyword>
<gene>
    <name type="primary">lpsD</name>
    <name type="ordered locus">R01570</name>
    <name type="ORF">SMc01221</name>
</gene>
<dbReference type="EC" id="2.4.-.-"/>
<dbReference type="EMBL" id="AF193023">
    <property type="protein sequence ID" value="AAF06010.1"/>
    <property type="molecule type" value="Genomic_DNA"/>
</dbReference>
<dbReference type="EMBL" id="AL591688">
    <property type="protein sequence ID" value="CAC46149.1"/>
    <property type="molecule type" value="Genomic_DNA"/>
</dbReference>
<dbReference type="RefSeq" id="NP_385676.1">
    <property type="nucleotide sequence ID" value="NC_003047.1"/>
</dbReference>
<dbReference type="RefSeq" id="WP_010969310.1">
    <property type="nucleotide sequence ID" value="NC_003047.1"/>
</dbReference>
<dbReference type="SMR" id="Q9R9N0"/>
<dbReference type="CAZy" id="GT4">
    <property type="family name" value="Glycosyltransferase Family 4"/>
</dbReference>
<dbReference type="EnsemblBacteria" id="CAC46149">
    <property type="protein sequence ID" value="CAC46149"/>
    <property type="gene ID" value="SMc01221"/>
</dbReference>
<dbReference type="KEGG" id="sme:SMc01221"/>
<dbReference type="PATRIC" id="fig|266834.11.peg.2996"/>
<dbReference type="eggNOG" id="COG0438">
    <property type="taxonomic scope" value="Bacteria"/>
</dbReference>
<dbReference type="HOGENOM" id="CLU_009583_0_3_5"/>
<dbReference type="OrthoDB" id="529131at2"/>
<dbReference type="UniPathway" id="UPA00958"/>
<dbReference type="Proteomes" id="UP000001976">
    <property type="component" value="Chromosome"/>
</dbReference>
<dbReference type="GO" id="GO:0016757">
    <property type="term" value="F:glycosyltransferase activity"/>
    <property type="evidence" value="ECO:0007669"/>
    <property type="project" value="UniProtKB-KW"/>
</dbReference>
<dbReference type="GO" id="GO:0009244">
    <property type="term" value="P:lipopolysaccharide core region biosynthetic process"/>
    <property type="evidence" value="ECO:0007669"/>
    <property type="project" value="UniProtKB-UniPathway"/>
</dbReference>
<dbReference type="CDD" id="cd03811">
    <property type="entry name" value="GT4_GT28_WabH-like"/>
    <property type="match status" value="1"/>
</dbReference>
<dbReference type="Gene3D" id="3.40.50.2000">
    <property type="entry name" value="Glycogen Phosphorylase B"/>
    <property type="match status" value="2"/>
</dbReference>
<dbReference type="InterPro" id="IPR001296">
    <property type="entry name" value="Glyco_trans_1"/>
</dbReference>
<dbReference type="InterPro" id="IPR028098">
    <property type="entry name" value="Glyco_trans_4-like_N"/>
</dbReference>
<dbReference type="PANTHER" id="PTHR12526">
    <property type="entry name" value="GLYCOSYLTRANSFERASE"/>
    <property type="match status" value="1"/>
</dbReference>
<dbReference type="Pfam" id="PF13439">
    <property type="entry name" value="Glyco_transf_4"/>
    <property type="match status" value="1"/>
</dbReference>
<dbReference type="Pfam" id="PF00534">
    <property type="entry name" value="Glycos_transf_1"/>
    <property type="match status" value="1"/>
</dbReference>
<dbReference type="SUPFAM" id="SSF53756">
    <property type="entry name" value="UDP-Glycosyltransferase/glycogen phosphorylase"/>
    <property type="match status" value="1"/>
</dbReference>
<reference key="1">
    <citation type="journal article" date="2001" name="J. Bacteriol.">
        <title>Genetic characterization of a Sinorhizobium meliloti chromosomal region involved in lipopolysaccharide biosynthesis.</title>
        <authorList>
            <person name="Lagares A."/>
            <person name="Hozbor D.F."/>
            <person name="Niehaus K."/>
            <person name="Pich Otero A.J.L."/>
            <person name="Lorenzen J."/>
            <person name="Arnold W."/>
            <person name="Puehler A."/>
        </authorList>
    </citation>
    <scope>NUCLEOTIDE SEQUENCE [GENOMIC DNA]</scope>
    <source>
        <strain>RCR2011 / SU47</strain>
    </source>
</reference>
<reference key="2">
    <citation type="journal article" date="2001" name="Proc. Natl. Acad. Sci. U.S.A.">
        <title>Analysis of the chromosome sequence of the legume symbiont Sinorhizobium meliloti strain 1021.</title>
        <authorList>
            <person name="Capela D."/>
            <person name="Barloy-Hubler F."/>
            <person name="Gouzy J."/>
            <person name="Bothe G."/>
            <person name="Ampe F."/>
            <person name="Batut J."/>
            <person name="Boistard P."/>
            <person name="Becker A."/>
            <person name="Boutry M."/>
            <person name="Cadieu E."/>
            <person name="Dreano S."/>
            <person name="Gloux S."/>
            <person name="Godrie T."/>
            <person name="Goffeau A."/>
            <person name="Kahn D."/>
            <person name="Kiss E."/>
            <person name="Lelaure V."/>
            <person name="Masuy D."/>
            <person name="Pohl T."/>
            <person name="Portetelle D."/>
            <person name="Puehler A."/>
            <person name="Purnelle B."/>
            <person name="Ramsperger U."/>
            <person name="Renard C."/>
            <person name="Thebault P."/>
            <person name="Vandenbol M."/>
            <person name="Weidner S."/>
            <person name="Galibert F."/>
        </authorList>
    </citation>
    <scope>NUCLEOTIDE SEQUENCE [LARGE SCALE GENOMIC DNA]</scope>
    <source>
        <strain>1021</strain>
    </source>
</reference>
<reference key="3">
    <citation type="journal article" date="2001" name="Science">
        <title>The composite genome of the legume symbiont Sinorhizobium meliloti.</title>
        <authorList>
            <person name="Galibert F."/>
            <person name="Finan T.M."/>
            <person name="Long S.R."/>
            <person name="Puehler A."/>
            <person name="Abola P."/>
            <person name="Ampe F."/>
            <person name="Barloy-Hubler F."/>
            <person name="Barnett M.J."/>
            <person name="Becker A."/>
            <person name="Boistard P."/>
            <person name="Bothe G."/>
            <person name="Boutry M."/>
            <person name="Bowser L."/>
            <person name="Buhrmester J."/>
            <person name="Cadieu E."/>
            <person name="Capela D."/>
            <person name="Chain P."/>
            <person name="Cowie A."/>
            <person name="Davis R.W."/>
            <person name="Dreano S."/>
            <person name="Federspiel N.A."/>
            <person name="Fisher R.F."/>
            <person name="Gloux S."/>
            <person name="Godrie T."/>
            <person name="Goffeau A."/>
            <person name="Golding B."/>
            <person name="Gouzy J."/>
            <person name="Gurjal M."/>
            <person name="Hernandez-Lucas I."/>
            <person name="Hong A."/>
            <person name="Huizar L."/>
            <person name="Hyman R.W."/>
            <person name="Jones T."/>
            <person name="Kahn D."/>
            <person name="Kahn M.L."/>
            <person name="Kalman S."/>
            <person name="Keating D.H."/>
            <person name="Kiss E."/>
            <person name="Komp C."/>
            <person name="Lelaure V."/>
            <person name="Masuy D."/>
            <person name="Palm C."/>
            <person name="Peck M.C."/>
            <person name="Pohl T.M."/>
            <person name="Portetelle D."/>
            <person name="Purnelle B."/>
            <person name="Ramsperger U."/>
            <person name="Surzycki R."/>
            <person name="Thebault P."/>
            <person name="Vandenbol M."/>
            <person name="Vorhoelter F.J."/>
            <person name="Weidner S."/>
            <person name="Wells D.H."/>
            <person name="Wong K."/>
            <person name="Yeh K.-C."/>
            <person name="Batut J."/>
        </authorList>
    </citation>
    <scope>NUCLEOTIDE SEQUENCE [LARGE SCALE GENOMIC DNA]</scope>
    <source>
        <strain>1021</strain>
    </source>
</reference>
<accession>Q9R9N0</accession>
<evidence type="ECO:0000305" key="1"/>
<proteinExistence type="inferred from homology"/>
<feature type="chain" id="PRO_0000080298" description="Lipopolysaccharide core biosynthesis glycosyltransferase LpsD">
    <location>
        <begin position="1"/>
        <end position="343"/>
    </location>
</feature>
<organism>
    <name type="scientific">Rhizobium meliloti (strain 1021)</name>
    <name type="common">Ensifer meliloti</name>
    <name type="synonym">Sinorhizobium meliloti</name>
    <dbReference type="NCBI Taxonomy" id="266834"/>
    <lineage>
        <taxon>Bacteria</taxon>
        <taxon>Pseudomonadati</taxon>
        <taxon>Pseudomonadota</taxon>
        <taxon>Alphaproteobacteria</taxon>
        <taxon>Hyphomicrobiales</taxon>
        <taxon>Rhizobiaceae</taxon>
        <taxon>Sinorhizobium/Ensifer group</taxon>
        <taxon>Sinorhizobium</taxon>
    </lineage>
</organism>
<protein>
    <recommendedName>
        <fullName>Lipopolysaccharide core biosynthesis glycosyltransferase LpsD</fullName>
        <ecNumber>2.4.-.-</ecNumber>
    </recommendedName>
</protein>
<comment type="pathway">
    <text>Bacterial outer membrane biogenesis; LPS core biosynthesis.</text>
</comment>
<comment type="similarity">
    <text evidence="1">Belongs to the glycosyltransferase group 1 family. Glycosyltransferase 4 subfamily.</text>
</comment>
<name>LPSD_RHIME</name>
<sequence>MKVMHIHFGTEGGAERFFVNLVNALHERGVEQRALIRPGRSWRKDLENGATIYEGVFRRISLSRFLLKWRMNRVLREFEPDVIMAWQLRASRFMPAHAKAFRISRLGDYPEHLGYYTNVQTLVCITPDMAAKVRELGWKRDIEVIANFTRARPAPPVARADLQTPADAFVVVGMGRFVKRKGFAGLIRAVKEVENTYLWLVGDGPEREQLEQLTDELGLRDRVRFTGWQTNAYGFLSAGDAFVINSSHEPLGNVCFEGWGAGKPTIASRAEGPSWVMTHESDALMVDCGDDVGLAAAIRRLRDDPALRERLSAGGSETLRTRFSEKAITDAYLDLFDRGVAKR</sequence>